<proteinExistence type="evidence at protein level"/>
<organism evidence="8">
    <name type="scientific">Xenopus tropicalis</name>
    <name type="common">Western clawed frog</name>
    <name type="synonym">Silurana tropicalis</name>
    <dbReference type="NCBI Taxonomy" id="8364"/>
    <lineage>
        <taxon>Eukaryota</taxon>
        <taxon>Metazoa</taxon>
        <taxon>Chordata</taxon>
        <taxon>Craniata</taxon>
        <taxon>Vertebrata</taxon>
        <taxon>Euteleostomi</taxon>
        <taxon>Amphibia</taxon>
        <taxon>Batrachia</taxon>
        <taxon>Anura</taxon>
        <taxon>Pipoidea</taxon>
        <taxon>Pipidae</taxon>
        <taxon>Xenopodinae</taxon>
        <taxon>Xenopus</taxon>
        <taxon>Silurana</taxon>
    </lineage>
</organism>
<dbReference type="EC" id="1.14.11.80" evidence="4"/>
<dbReference type="EMBL" id="BC127289">
    <property type="protein sequence ID" value="AAI27290.1"/>
    <property type="molecule type" value="mRNA"/>
</dbReference>
<dbReference type="RefSeq" id="NP_001090656.1">
    <property type="nucleotide sequence ID" value="NM_001097187.1"/>
</dbReference>
<dbReference type="PDB" id="4HP1">
    <property type="method" value="X-ray"/>
    <property type="resolution" value="2.25 A"/>
    <property type="chains" value="C=58-111"/>
</dbReference>
<dbReference type="PDB" id="4HP3">
    <property type="method" value="X-ray"/>
    <property type="resolution" value="2.05 A"/>
    <property type="chains" value="C=58-111"/>
</dbReference>
<dbReference type="PDBsum" id="4HP1"/>
<dbReference type="PDBsum" id="4HP3"/>
<dbReference type="SMR" id="A0JP82"/>
<dbReference type="FunCoup" id="A0JP82">
    <property type="interactions" value="2568"/>
</dbReference>
<dbReference type="STRING" id="8364.ENSXETP00000013965"/>
<dbReference type="PaxDb" id="8364-ENSXETP00000054061"/>
<dbReference type="GeneID" id="100036628"/>
<dbReference type="KEGG" id="xtr:100036628"/>
<dbReference type="AGR" id="Xenbase:XB-GENE-877084"/>
<dbReference type="CTD" id="200424"/>
<dbReference type="Xenbase" id="XB-GENE-877084">
    <property type="gene designation" value="tet3"/>
</dbReference>
<dbReference type="eggNOG" id="ENOG502QURD">
    <property type="taxonomic scope" value="Eukaryota"/>
</dbReference>
<dbReference type="InParanoid" id="A0JP82"/>
<dbReference type="OrthoDB" id="8854879at2759"/>
<dbReference type="Proteomes" id="UP000008143">
    <property type="component" value="Chromosome 3"/>
</dbReference>
<dbReference type="GO" id="GO:0005694">
    <property type="term" value="C:chromosome"/>
    <property type="evidence" value="ECO:0007669"/>
    <property type="project" value="UniProtKB-SubCell"/>
</dbReference>
<dbReference type="GO" id="GO:0005634">
    <property type="term" value="C:nucleus"/>
    <property type="evidence" value="ECO:0007669"/>
    <property type="project" value="UniProtKB-SubCell"/>
</dbReference>
<dbReference type="GO" id="GO:0070579">
    <property type="term" value="F:5-methylcytosine dioxygenase activity"/>
    <property type="evidence" value="ECO:0000314"/>
    <property type="project" value="ARUK-UCL"/>
</dbReference>
<dbReference type="GO" id="GO:0008327">
    <property type="term" value="F:methyl-CpG binding"/>
    <property type="evidence" value="ECO:0000314"/>
    <property type="project" value="ARUK-UCL"/>
</dbReference>
<dbReference type="GO" id="GO:0000978">
    <property type="term" value="F:RNA polymerase II cis-regulatory region sequence-specific DNA binding"/>
    <property type="evidence" value="ECO:0000314"/>
    <property type="project" value="ARUK-UCL"/>
</dbReference>
<dbReference type="GO" id="GO:0008270">
    <property type="term" value="F:zinc ion binding"/>
    <property type="evidence" value="ECO:0000250"/>
    <property type="project" value="UniProtKB"/>
</dbReference>
<dbReference type="GO" id="GO:0141167">
    <property type="term" value="P:chromosomal 5-methylcytosine DNA demethylation, oxidation pathway"/>
    <property type="evidence" value="ECO:0007669"/>
    <property type="project" value="InterPro"/>
</dbReference>
<dbReference type="GO" id="GO:0001654">
    <property type="term" value="P:eye development"/>
    <property type="evidence" value="ECO:0000316"/>
    <property type="project" value="ARUK-UCL"/>
</dbReference>
<dbReference type="GO" id="GO:0044029">
    <property type="term" value="P:positive regulation of gene expression via chromosomal CpG island demethylation"/>
    <property type="evidence" value="ECO:0000315"/>
    <property type="project" value="ARUK-UCL"/>
</dbReference>
<dbReference type="CDD" id="cd18897">
    <property type="entry name" value="TET3"/>
    <property type="match status" value="1"/>
</dbReference>
<dbReference type="InterPro" id="IPR024779">
    <property type="entry name" value="2OGFeDO_JBP1/TET_oxygenase_dom"/>
</dbReference>
<dbReference type="InterPro" id="IPR040175">
    <property type="entry name" value="TET1/2/3"/>
</dbReference>
<dbReference type="InterPro" id="IPR046942">
    <property type="entry name" value="TET_oxygenase"/>
</dbReference>
<dbReference type="InterPro" id="IPR002857">
    <property type="entry name" value="Znf_CXXC"/>
</dbReference>
<dbReference type="PANTHER" id="PTHR23358">
    <property type="entry name" value="METHYLCYTOSINE DIOXYGENASE TET"/>
    <property type="match status" value="1"/>
</dbReference>
<dbReference type="PANTHER" id="PTHR23358:SF6">
    <property type="entry name" value="METHYLCYTOSINE DIOXYGENASE TET"/>
    <property type="match status" value="1"/>
</dbReference>
<dbReference type="Pfam" id="PF12851">
    <property type="entry name" value="Tet_JBP"/>
    <property type="match status" value="1"/>
</dbReference>
<dbReference type="Pfam" id="PF02008">
    <property type="entry name" value="zf-CXXC"/>
    <property type="match status" value="1"/>
</dbReference>
<dbReference type="SMART" id="SM01333">
    <property type="entry name" value="Tet_JBP"/>
    <property type="match status" value="1"/>
</dbReference>
<dbReference type="PROSITE" id="PS51058">
    <property type="entry name" value="ZF_CXXC"/>
    <property type="match status" value="1"/>
</dbReference>
<protein>
    <recommendedName>
        <fullName>Methylcytosine dioxygenase tet3</fullName>
        <ecNumber evidence="4">1.14.11.80</ecNumber>
    </recommendedName>
</protein>
<evidence type="ECO:0000250" key="1">
    <source>
        <dbReference type="UniProtKB" id="Q6N021"/>
    </source>
</evidence>
<evidence type="ECO:0000255" key="2">
    <source>
        <dbReference type="PROSITE-ProRule" id="PRU00509"/>
    </source>
</evidence>
<evidence type="ECO:0000256" key="3">
    <source>
        <dbReference type="SAM" id="MobiDB-lite"/>
    </source>
</evidence>
<evidence type="ECO:0000269" key="4">
    <source>
    </source>
</evidence>
<evidence type="ECO:0000269" key="5">
    <source>
    </source>
</evidence>
<evidence type="ECO:0000305" key="6"/>
<evidence type="ECO:0000305" key="7">
    <source>
    </source>
</evidence>
<evidence type="ECO:0000312" key="8">
    <source>
        <dbReference type="EMBL" id="AAI27290.1"/>
    </source>
</evidence>
<evidence type="ECO:0000312" key="9">
    <source>
        <dbReference type="Xenbase" id="XB-GENE-877084"/>
    </source>
</evidence>
<evidence type="ECO:0007744" key="10">
    <source>
        <dbReference type="PDB" id="4HP1"/>
    </source>
</evidence>
<evidence type="ECO:0007744" key="11">
    <source>
        <dbReference type="PDB" id="4HP3"/>
    </source>
</evidence>
<evidence type="ECO:0007829" key="12">
    <source>
        <dbReference type="PDB" id="4HP3"/>
    </source>
</evidence>
<comment type="function">
    <text evidence="4">Dioxygenase that catalyzes the conversion of the modified genomic base 5-methylcytosine (5mC) into 5-hydroxymethylcytosine (5hmC) and plays a key role in epigenetic chromatin reprogramming during embryonic development. Conversion of 5mC into 5hmC probably constitutes the first step in cytosine demethylation. Selectively binds to the promoter region of target genes and contributes to regulate the expression of numerous developmental genes, including pax6, rax, sox9 and six3. May also contribute to the regulation of target genes in ways that do not require its enzyme activity.</text>
</comment>
<comment type="catalytic activity">
    <reaction evidence="4">
        <text>a 5-methyl-2'-deoxycytidine in DNA + 2-oxoglutarate + O2 = a 5-hydroxymethyl-2'-deoxycytidine in DNA + succinate + CO2</text>
        <dbReference type="Rhea" id="RHEA:52636"/>
        <dbReference type="Rhea" id="RHEA-COMP:11370"/>
        <dbReference type="Rhea" id="RHEA-COMP:13315"/>
        <dbReference type="ChEBI" id="CHEBI:15379"/>
        <dbReference type="ChEBI" id="CHEBI:16526"/>
        <dbReference type="ChEBI" id="CHEBI:16810"/>
        <dbReference type="ChEBI" id="CHEBI:30031"/>
        <dbReference type="ChEBI" id="CHEBI:85454"/>
        <dbReference type="ChEBI" id="CHEBI:136731"/>
        <dbReference type="EC" id="1.14.11.80"/>
    </reaction>
</comment>
<comment type="catalytic activity">
    <reaction evidence="1">
        <text>a 5-hydroxymethyl-2'-deoxycytidine in DNA + 2-oxoglutarate + O2 = a 5-formyl-2'-deoxycytidine in DNA + succinate + CO2 + H2O</text>
        <dbReference type="Rhea" id="RHEA:53828"/>
        <dbReference type="Rhea" id="RHEA-COMP:13315"/>
        <dbReference type="Rhea" id="RHEA-COMP:13656"/>
        <dbReference type="ChEBI" id="CHEBI:15377"/>
        <dbReference type="ChEBI" id="CHEBI:15379"/>
        <dbReference type="ChEBI" id="CHEBI:16526"/>
        <dbReference type="ChEBI" id="CHEBI:16810"/>
        <dbReference type="ChEBI" id="CHEBI:30031"/>
        <dbReference type="ChEBI" id="CHEBI:136731"/>
        <dbReference type="ChEBI" id="CHEBI:137731"/>
        <dbReference type="EC" id="1.14.11.80"/>
    </reaction>
</comment>
<comment type="catalytic activity">
    <reaction evidence="1">
        <text>a 5-formyl-2'-deoxycytidine in DNA + 2-oxoglutarate + O2 = a 5-carboxyl-2'-deoxycytidine in DNA + succinate + CO2 + H(+)</text>
        <dbReference type="Rhea" id="RHEA:53832"/>
        <dbReference type="Rhea" id="RHEA-COMP:13656"/>
        <dbReference type="Rhea" id="RHEA-COMP:13657"/>
        <dbReference type="ChEBI" id="CHEBI:15378"/>
        <dbReference type="ChEBI" id="CHEBI:15379"/>
        <dbReference type="ChEBI" id="CHEBI:16526"/>
        <dbReference type="ChEBI" id="CHEBI:16810"/>
        <dbReference type="ChEBI" id="CHEBI:30031"/>
        <dbReference type="ChEBI" id="CHEBI:137731"/>
        <dbReference type="ChEBI" id="CHEBI:137732"/>
        <dbReference type="EC" id="1.14.11.80"/>
    </reaction>
</comment>
<comment type="cofactor">
    <cofactor evidence="1">
        <name>Fe(2+)</name>
        <dbReference type="ChEBI" id="CHEBI:29033"/>
    </cofactor>
    <text evidence="1">Binds 1 Fe(2+) ion per subunit.</text>
</comment>
<comment type="cofactor">
    <cofactor evidence="1">
        <name>Zn(2+)</name>
        <dbReference type="ChEBI" id="CHEBI:29105"/>
    </cofactor>
    <text evidence="1">The zinc ions have a structural role.</text>
</comment>
<comment type="subcellular location">
    <subcellularLocation>
        <location evidence="4">Nucleus</location>
    </subcellularLocation>
    <subcellularLocation>
        <location evidence="4">Chromosome</location>
    </subcellularLocation>
    <text evidence="4">Detected on chromatin, where it binds to target gene promoters.</text>
</comment>
<comment type="domain">
    <text evidence="4">Binds target DNA that contains at least one unmethylated cytosine via the CXXC-type zinc-finger domain.</text>
</comment>
<comment type="similarity">
    <text evidence="6">Belongs to the TET family.</text>
</comment>
<reference evidence="8" key="1">
    <citation type="submission" date="2006-11" db="EMBL/GenBank/DDBJ databases">
        <authorList>
            <consortium name="NIH - Xenopus Gene Collection (XGC) project"/>
        </authorList>
    </citation>
    <scope>NUCLEOTIDE SEQUENCE [LARGE SCALE MRNA]</scope>
    <source>
        <tissue evidence="8">Testis</tissue>
    </source>
</reference>
<reference evidence="10 11" key="2">
    <citation type="journal article" date="2012" name="Cell">
        <title>Tet3 CXXC domain and dioxygenase activity cooperatively regulate key genes for Xenopus eye and neural development.</title>
        <authorList>
            <person name="Xu Y."/>
            <person name="Xu C."/>
            <person name="Kato A."/>
            <person name="Tempel W."/>
            <person name="Abreu J.G."/>
            <person name="Bian C."/>
            <person name="Hu Y."/>
            <person name="Hu D."/>
            <person name="Zhao B."/>
            <person name="Cerovina T."/>
            <person name="Diao J."/>
            <person name="Wu F."/>
            <person name="He H.H."/>
            <person name="Cui Q."/>
            <person name="Clark E."/>
            <person name="Ma C."/>
            <person name="Barbara A."/>
            <person name="Veenstra G.J.C."/>
            <person name="Xu G."/>
            <person name="Kaiser U.B."/>
            <person name="Liu X.S."/>
            <person name="Sugrue S.P."/>
            <person name="He X."/>
            <person name="Min J."/>
            <person name="Kato Y."/>
            <person name="Shi Y.G."/>
        </authorList>
    </citation>
    <scope>X-RAY CRYSTALLOGRAPHY (2.05 ANGSTROMS) OF 58-111 IN COMPLEX WITH ZINC AND TARGET DNA</scope>
    <scope>FUNCTION</scope>
    <scope>CATALYTIC ACTIVITY</scope>
    <scope>SUBCELLULAR LOCATION</scope>
    <scope>DOMAIN</scope>
    <scope>MUTAGENESIS OF HIS-90 AND 1206-HIS--ASP-1208</scope>
    <scope>COFACTOR</scope>
</reference>
<reference key="3">
    <citation type="journal article" date="2018" name="Structure">
        <title>DNA Sequence Recognition of Human CXXC Domains and Their Structural Determinants.</title>
        <authorList>
            <person name="Xu C."/>
            <person name="Liu K."/>
            <person name="Lei M."/>
            <person name="Yang A."/>
            <person name="Li Y."/>
            <person name="Hughes T.R."/>
            <person name="Min J."/>
        </authorList>
    </citation>
    <scope>MUTAGENESIS OF HIS-90</scope>
</reference>
<gene>
    <name evidence="9" type="primary">tet3</name>
</gene>
<keyword id="KW-0002">3D-structure</keyword>
<keyword id="KW-0156">Chromatin regulator</keyword>
<keyword id="KW-0158">Chromosome</keyword>
<keyword id="KW-0217">Developmental protein</keyword>
<keyword id="KW-0223">Dioxygenase</keyword>
<keyword id="KW-0238">DNA-binding</keyword>
<keyword id="KW-0408">Iron</keyword>
<keyword id="KW-0479">Metal-binding</keyword>
<keyword id="KW-0539">Nucleus</keyword>
<keyword id="KW-0560">Oxidoreductase</keyword>
<keyword id="KW-1185">Reference proteome</keyword>
<keyword id="KW-0862">Zinc</keyword>
<keyword id="KW-0863">Zinc-finger</keyword>
<accession>A0JP82</accession>
<name>TET3_XENTR</name>
<feature type="chain" id="PRO_0000442317" description="Methylcytosine dioxygenase tet3">
    <location>
        <begin position="1"/>
        <end position="1901"/>
    </location>
</feature>
<feature type="zinc finger region" description="CXXC-type" evidence="2">
    <location>
        <begin position="58"/>
        <end position="99"/>
    </location>
</feature>
<feature type="region of interest" description="Disordered" evidence="3">
    <location>
        <begin position="434"/>
        <end position="455"/>
    </location>
</feature>
<feature type="region of interest" description="Disordered" evidence="3">
    <location>
        <begin position="602"/>
        <end position="658"/>
    </location>
</feature>
<feature type="region of interest" description="Disordered" evidence="3">
    <location>
        <begin position="751"/>
        <end position="787"/>
    </location>
</feature>
<feature type="region of interest" description="Disordered" evidence="3">
    <location>
        <begin position="808"/>
        <end position="867"/>
    </location>
</feature>
<feature type="region of interest" description="Disordered" evidence="3">
    <location>
        <begin position="1282"/>
        <end position="1338"/>
    </location>
</feature>
<feature type="region of interest" description="Disordered" evidence="3">
    <location>
        <begin position="1457"/>
        <end position="1501"/>
    </location>
</feature>
<feature type="region of interest" description="Disordered" evidence="3">
    <location>
        <begin position="1591"/>
        <end position="1624"/>
    </location>
</feature>
<feature type="region of interest" description="Disordered" evidence="3">
    <location>
        <begin position="1680"/>
        <end position="1745"/>
    </location>
</feature>
<feature type="compositionally biased region" description="Polar residues" evidence="3">
    <location>
        <begin position="442"/>
        <end position="455"/>
    </location>
</feature>
<feature type="compositionally biased region" description="Polar residues" evidence="3">
    <location>
        <begin position="602"/>
        <end position="614"/>
    </location>
</feature>
<feature type="compositionally biased region" description="Basic residues" evidence="3">
    <location>
        <begin position="640"/>
        <end position="652"/>
    </location>
</feature>
<feature type="compositionally biased region" description="Low complexity" evidence="3">
    <location>
        <begin position="758"/>
        <end position="771"/>
    </location>
</feature>
<feature type="compositionally biased region" description="Polar residues" evidence="3">
    <location>
        <begin position="847"/>
        <end position="867"/>
    </location>
</feature>
<feature type="compositionally biased region" description="Basic and acidic residues" evidence="3">
    <location>
        <begin position="1291"/>
        <end position="1325"/>
    </location>
</feature>
<feature type="compositionally biased region" description="Polar residues" evidence="3">
    <location>
        <begin position="1326"/>
        <end position="1338"/>
    </location>
</feature>
<feature type="compositionally biased region" description="Basic and acidic residues" evidence="3">
    <location>
        <begin position="1465"/>
        <end position="1474"/>
    </location>
</feature>
<feature type="compositionally biased region" description="Polar residues" evidence="3">
    <location>
        <begin position="1477"/>
        <end position="1487"/>
    </location>
</feature>
<feature type="compositionally biased region" description="Polar residues" evidence="3">
    <location>
        <begin position="1680"/>
        <end position="1693"/>
    </location>
</feature>
<feature type="compositionally biased region" description="Polar residues" evidence="3">
    <location>
        <begin position="1702"/>
        <end position="1719"/>
    </location>
</feature>
<feature type="binding site" evidence="2">
    <location>
        <position position="65"/>
    </location>
    <ligand>
        <name>Zn(2+)</name>
        <dbReference type="ChEBI" id="CHEBI:29105"/>
        <label>1</label>
    </ligand>
</feature>
<feature type="binding site" evidence="2">
    <location>
        <position position="68"/>
    </location>
    <ligand>
        <name>Zn(2+)</name>
        <dbReference type="ChEBI" id="CHEBI:29105"/>
        <label>1</label>
    </ligand>
</feature>
<feature type="binding site" evidence="2">
    <location>
        <position position="71"/>
    </location>
    <ligand>
        <name>Zn(2+)</name>
        <dbReference type="ChEBI" id="CHEBI:29105"/>
        <label>1</label>
    </ligand>
</feature>
<feature type="binding site" evidence="2">
    <location>
        <position position="77"/>
    </location>
    <ligand>
        <name>Zn(2+)</name>
        <dbReference type="ChEBI" id="CHEBI:29105"/>
        <label>2</label>
    </ligand>
</feature>
<feature type="binding site" evidence="2">
    <location>
        <position position="80"/>
    </location>
    <ligand>
        <name>Zn(2+)</name>
        <dbReference type="ChEBI" id="CHEBI:29105"/>
        <label>2</label>
    </ligand>
</feature>
<feature type="binding site" evidence="2">
    <location>
        <position position="83"/>
    </location>
    <ligand>
        <name>Zn(2+)</name>
        <dbReference type="ChEBI" id="CHEBI:29105"/>
        <label>2</label>
    </ligand>
</feature>
<feature type="binding site" evidence="2">
    <location>
        <position position="93"/>
    </location>
    <ligand>
        <name>Zn(2+)</name>
        <dbReference type="ChEBI" id="CHEBI:29105"/>
        <label>2</label>
    </ligand>
</feature>
<feature type="binding site" evidence="2">
    <location>
        <position position="98"/>
    </location>
    <ligand>
        <name>Zn(2+)</name>
        <dbReference type="ChEBI" id="CHEBI:29105"/>
        <label>1</label>
    </ligand>
</feature>
<feature type="binding site" evidence="1">
    <location>
        <position position="957"/>
    </location>
    <ligand>
        <name>Zn(2+)</name>
        <dbReference type="ChEBI" id="CHEBI:29105"/>
        <label>3</label>
    </ligand>
</feature>
<feature type="binding site" evidence="1">
    <location>
        <position position="959"/>
    </location>
    <ligand>
        <name>Zn(2+)</name>
        <dbReference type="ChEBI" id="CHEBI:29105"/>
        <label>3</label>
    </ligand>
</feature>
<feature type="binding site" evidence="1">
    <location>
        <position position="1017"/>
    </location>
    <ligand>
        <name>Zn(2+)</name>
        <dbReference type="ChEBI" id="CHEBI:29105"/>
        <label>4</label>
    </ligand>
</feature>
<feature type="binding site" evidence="1">
    <location>
        <position position="1043"/>
    </location>
    <ligand>
        <name>Zn(2+)</name>
        <dbReference type="ChEBI" id="CHEBI:29105"/>
        <label>1</label>
    </ligand>
</feature>
<feature type="binding site" evidence="1">
    <location>
        <position position="1045"/>
    </location>
    <ligand>
        <name>Zn(2+)</name>
        <dbReference type="ChEBI" id="CHEBI:29105"/>
        <label>3</label>
    </ligand>
</feature>
<feature type="binding site" evidence="1">
    <location>
        <position position="1085"/>
    </location>
    <ligand>
        <name>2-oxoglutarate</name>
        <dbReference type="ChEBI" id="CHEBI:16810"/>
    </ligand>
</feature>
<feature type="binding site" evidence="1">
    <location>
        <position position="1095"/>
    </location>
    <ligand>
        <name>Zn(2+)</name>
        <dbReference type="ChEBI" id="CHEBI:29105"/>
        <label>4</label>
    </ligand>
</feature>
<feature type="binding site" evidence="1">
    <location>
        <position position="1097"/>
    </location>
    <ligand>
        <name>Zn(2+)</name>
        <dbReference type="ChEBI" id="CHEBI:29105"/>
        <label>4</label>
    </ligand>
</feature>
<feature type="binding site" evidence="1">
    <location>
        <position position="1113"/>
    </location>
    <ligand>
        <name>Zn(2+)</name>
        <dbReference type="ChEBI" id="CHEBI:29105"/>
        <label>3</label>
    </ligand>
</feature>
<feature type="binding site" evidence="1">
    <location>
        <position position="1122"/>
    </location>
    <ligand>
        <name>Zn(2+)</name>
        <dbReference type="ChEBI" id="CHEBI:29105"/>
        <label>3</label>
    </ligand>
</feature>
<feature type="binding site" evidence="1">
    <location>
        <position position="1182"/>
    </location>
    <ligand>
        <name>Zn(2+)</name>
        <dbReference type="ChEBI" id="CHEBI:29105"/>
        <label>3</label>
    </ligand>
</feature>
<feature type="binding site" evidence="1">
    <location>
        <position position="1198"/>
    </location>
    <ligand>
        <name>2-oxoglutarate</name>
        <dbReference type="ChEBI" id="CHEBI:16810"/>
    </ligand>
</feature>
<feature type="binding site" evidence="1">
    <location>
        <position position="1204"/>
    </location>
    <ligand>
        <name>Zn(2+)</name>
        <dbReference type="ChEBI" id="CHEBI:29105"/>
        <label>2</label>
    </ligand>
</feature>
<feature type="binding site" evidence="7">
    <location>
        <position position="1206"/>
    </location>
    <ligand>
        <name>Fe cation</name>
        <dbReference type="ChEBI" id="CHEBI:24875"/>
        <note>catalytic</note>
    </ligand>
</feature>
<feature type="binding site" evidence="7">
    <location>
        <position position="1208"/>
    </location>
    <ligand>
        <name>Fe cation</name>
        <dbReference type="ChEBI" id="CHEBI:24875"/>
        <note>catalytic</note>
    </ligand>
</feature>
<feature type="binding site" evidence="1">
    <location>
        <position position="1240"/>
    </location>
    <ligand>
        <name>2-oxoglutarate</name>
        <dbReference type="ChEBI" id="CHEBI:16810"/>
    </ligand>
</feature>
<feature type="binding site" evidence="1">
    <location>
        <position position="1780"/>
    </location>
    <ligand>
        <name>Fe cation</name>
        <dbReference type="ChEBI" id="CHEBI:24875"/>
        <note>catalytic</note>
    </ligand>
</feature>
<feature type="binding site" evidence="1">
    <location>
        <begin position="1795"/>
        <end position="1797"/>
    </location>
    <ligand>
        <name>2-oxoglutarate</name>
        <dbReference type="ChEBI" id="CHEBI:16810"/>
    </ligand>
</feature>
<feature type="mutagenesis site" description="Abolishes binding to target DNA. No effect on nuclear location and on enzyme activity." evidence="4">
    <original>H</original>
    <variation>A</variation>
    <location>
        <position position="90"/>
    </location>
</feature>
<feature type="mutagenesis site" description="Increased binding affinity for CpT dsDNA." evidence="5">
    <original>H</original>
    <variation>R</variation>
    <location>
        <position position="90"/>
    </location>
</feature>
<feature type="mutagenesis site" description="Abolishes enzyme activity." evidence="4">
    <location>
        <begin position="1206"/>
        <end position="1208"/>
    </location>
</feature>
<feature type="strand" evidence="12">
    <location>
        <begin position="66"/>
        <end position="68"/>
    </location>
</feature>
<feature type="helix" evidence="12">
    <location>
        <begin position="69"/>
        <end position="72"/>
    </location>
</feature>
<feature type="strand" evidence="12">
    <location>
        <begin position="78"/>
        <end position="80"/>
    </location>
</feature>
<feature type="helix" evidence="12">
    <location>
        <begin position="81"/>
        <end position="84"/>
    </location>
</feature>
<feature type="helix" evidence="12">
    <location>
        <begin position="86"/>
        <end position="89"/>
    </location>
</feature>
<feature type="turn" evidence="12">
    <location>
        <begin position="94"/>
        <end position="96"/>
    </location>
</feature>
<feature type="turn" evidence="12">
    <location>
        <begin position="99"/>
        <end position="102"/>
    </location>
</feature>
<sequence length="1901" mass="210426">MDTQPAPVPHVLPQDVYEFPDDQESLGRLRVSEMPAELNGGGGGGSAAAFAMELPEQSNKKRKRCGVCVPCLRKEPCGACYNCVNRSTSHQICKMRKCEQLKKKRVVPMKGVENCSESILVDGPKTDQMEAGPVNHVQEGRLKQECDSTLPSKGCEDLANQLLMEANSWLSNTAAPQDPCNKLNWDKPTIPNHAANNNSNLEDAKNLVAFSAVAEAMSTYGMPASGTPSSVSLQLYEKFNYETNRDNSGHLEGNAPSCPEDLNTLKAALALAKHGVKPPNCNCDGPECPDYLEWLENKIKSTVKGSQESPFPNLGQVSKELVQKQYPKEQVLNLENKNSTCPSGNLPFSQNALSLAKEKNISLQTAIAIEALTQLSSALPQTNNECPNAPSQPLINPHDQLTHFPSAKGNQLPMLPVARNELFQNQQSQLYTGKNALPVPQSPRQTSWEQNKKSSYQEGQYIPENLSHSSSVLPSDASTPQKPEFLQQWVQNADLLKSPSDPMTGLKQLLGNTDEYIKSVFKGPEALPNKKNVKPKHTIKSIKKESTEFLKMSPDQQLSQLLQTNEFHRNTQAALQQHLHHKRNLFVDPNAMEACTQEQQNWWVPSSQQAPVSKTTEKPVKERKKRRQSPSQKQVEPKPKPQRKQVQIKKPKVKEGSAVFMPVSQISLDTFRRVEKEENQGKEMDAENSLPNNVQTELLESQSLQLTGSQANPDDRKTVNTQEMCNENQSNIGKANNFALCVNRANSFVAKDQCPTPSTHDTSSSSGQGDSANQHTNVSDVPGQNDLSCLDDKLEDLIRQFEAEFGEDFSLPGSAVPSQNGEGPPKQTPSGDPQFKLPFPSQLLPPENSTKPATHSNPALSNNPVSREVSNNLDSLFSSKSPKQIKIESSGAITVVSTTCFYSEENQHLDGTPTKSDLPFNPTLSGFLDSPLKYLTSPTKSLIDTPAKKAQAEFPTCDCVEQINEKDEGPYYTHLGSGPTVASIRELMEERFGQKGDAIRIEKVIYTGKEGKSSRGCPIAKWVIRRQSEDEKLMCLVRQRAGHHCENAVIIILIMAWEGIPRSLGDSLYNDITETITKYGNPTSRRCGLNDDRTCACQGKDPNTCGASFSFGCSWSMYFNGCKYARSKTPRKFRLIGENPKEEDGLKDNFQNLATKVAPVYKMLAPQAYQNQVNNEDIAIDCRLGLKEGRPFSGVTACMDFCAHAHKDQHNLYNGCTVVCTLTKEDNRMIGRVAEDEQLHVLPLYKVSTTDEFGSEEGQLEKIKKGGIHVLSSFPREVRKLSEPAKSCRQRQLEAKKAAAEKKKLQKEKLVSPDKTKQEPSDKKTCQQNPGVPQQQTKPCIKVEPSNHYNNFKYNGNGVVESYSVLGSCRPSDPYSMNSVYSYHSFYAQPNLPSVNGFHSKYALPPFGFYGFPNNPVVPNQFMNYGTSDARNSGWMNNCFEKKPELQSLADGMNQSYGSELSEQSFRRSSEVPHHYSLQNPSSQKSVNVPHRTTPAPVETTPYSNLPCYNKVIKKEPGSDPLVDSFQRANSVHSHSPGVNHSLQASDLPISYKANGALSSSGRTNAESPCSMFMPNDKNGLEKKDYFGVHSNAPGLKDKQWPPYGTDVSVRQHDSLDSQSPGKVWSSCKLSDSSAALPSSASTQDKNWNGRQVSLNQGMKESALFQEKLWNSVAASDRCSATPSDRSSITPCSELQDKNWGSFPNPTVNSLKTDSSQNHWDPYSLDDNMDDGQSKSVKEEDDEEIWSDSEHNFLDENIGGVAVAPGHGSILIECARRELHATTPLKKPNRCHPTRISLVFYQHKNLNQPNHGLALWEAKMKQLAERARAREEEAAKLGIKQEVKSLGKKRKWGGAATTETPPVEKKDYTPTRQAATILTDSATTSFSYAYTKVTGPYSRFI</sequence>